<dbReference type="EC" id="1.3.7.7" evidence="1"/>
<dbReference type="EMBL" id="CP001291">
    <property type="protein sequence ID" value="ACK68827.1"/>
    <property type="molecule type" value="Genomic_DNA"/>
</dbReference>
<dbReference type="RefSeq" id="WP_012597777.1">
    <property type="nucleotide sequence ID" value="NC_011729.1"/>
</dbReference>
<dbReference type="SMR" id="B7KC04"/>
<dbReference type="STRING" id="65393.PCC7424_0359"/>
<dbReference type="KEGG" id="cyc:PCC7424_0359"/>
<dbReference type="eggNOG" id="COG2710">
    <property type="taxonomic scope" value="Bacteria"/>
</dbReference>
<dbReference type="HOGENOM" id="CLU_025470_0_0_3"/>
<dbReference type="OrthoDB" id="5717231at2"/>
<dbReference type="UniPathway" id="UPA00670"/>
<dbReference type="Proteomes" id="UP000002384">
    <property type="component" value="Chromosome"/>
</dbReference>
<dbReference type="GO" id="GO:0051539">
    <property type="term" value="F:4 iron, 4 sulfur cluster binding"/>
    <property type="evidence" value="ECO:0007669"/>
    <property type="project" value="UniProtKB-UniRule"/>
</dbReference>
<dbReference type="GO" id="GO:0005524">
    <property type="term" value="F:ATP binding"/>
    <property type="evidence" value="ECO:0007669"/>
    <property type="project" value="UniProtKB-UniRule"/>
</dbReference>
<dbReference type="GO" id="GO:0046872">
    <property type="term" value="F:metal ion binding"/>
    <property type="evidence" value="ECO:0007669"/>
    <property type="project" value="UniProtKB-KW"/>
</dbReference>
<dbReference type="GO" id="GO:0016730">
    <property type="term" value="F:oxidoreductase activity, acting on iron-sulfur proteins as donors"/>
    <property type="evidence" value="ECO:0007669"/>
    <property type="project" value="InterPro"/>
</dbReference>
<dbReference type="GO" id="GO:0016636">
    <property type="term" value="F:oxidoreductase activity, acting on the CH-CH group of donors, iron-sulfur protein as acceptor"/>
    <property type="evidence" value="ECO:0007669"/>
    <property type="project" value="UniProtKB-UniRule"/>
</dbReference>
<dbReference type="GO" id="GO:0036068">
    <property type="term" value="P:light-independent chlorophyll biosynthetic process"/>
    <property type="evidence" value="ECO:0007669"/>
    <property type="project" value="UniProtKB-UniRule"/>
</dbReference>
<dbReference type="GO" id="GO:0019685">
    <property type="term" value="P:photosynthesis, dark reaction"/>
    <property type="evidence" value="ECO:0007669"/>
    <property type="project" value="InterPro"/>
</dbReference>
<dbReference type="CDD" id="cd01981">
    <property type="entry name" value="Pchlide_reductase_B"/>
    <property type="match status" value="1"/>
</dbReference>
<dbReference type="Gene3D" id="1.20.89.20">
    <property type="match status" value="1"/>
</dbReference>
<dbReference type="Gene3D" id="3.40.50.1980">
    <property type="entry name" value="Nitrogenase molybdenum iron protein domain"/>
    <property type="match status" value="3"/>
</dbReference>
<dbReference type="Gene3D" id="1.10.8.550">
    <property type="entry name" value="Proto-chlorophyllide reductase 57 kD subunit B"/>
    <property type="match status" value="1"/>
</dbReference>
<dbReference type="HAMAP" id="MF_00353">
    <property type="entry name" value="ChlB_BchB"/>
    <property type="match status" value="1"/>
</dbReference>
<dbReference type="InterPro" id="IPR050152">
    <property type="entry name" value="ChlB/BchB/BchZ"/>
</dbReference>
<dbReference type="InterPro" id="IPR013580">
    <property type="entry name" value="LI-POR_suB-like_C"/>
</dbReference>
<dbReference type="InterPro" id="IPR000510">
    <property type="entry name" value="Nase/OxRdtase_comp1"/>
</dbReference>
<dbReference type="InterPro" id="IPR042298">
    <property type="entry name" value="P-CP_red_C"/>
</dbReference>
<dbReference type="InterPro" id="IPR005969">
    <property type="entry name" value="Protochl_reductB"/>
</dbReference>
<dbReference type="InterPro" id="IPR016209">
    <property type="entry name" value="Protochlorophyllide_Rdtase"/>
</dbReference>
<dbReference type="NCBIfam" id="TIGR01278">
    <property type="entry name" value="DPOR_BchB"/>
    <property type="match status" value="1"/>
</dbReference>
<dbReference type="PANTHER" id="PTHR33712">
    <property type="entry name" value="LIGHT-INDEPENDENT PROTOCHLOROPHYLLIDE REDUCTASE SUBUNIT B"/>
    <property type="match status" value="1"/>
</dbReference>
<dbReference type="PANTHER" id="PTHR33712:SF7">
    <property type="entry name" value="LIGHT-INDEPENDENT PROTOCHLOROPHYLLIDE REDUCTASE SUBUNIT B"/>
    <property type="match status" value="1"/>
</dbReference>
<dbReference type="Pfam" id="PF00148">
    <property type="entry name" value="Oxidored_nitro"/>
    <property type="match status" value="1"/>
</dbReference>
<dbReference type="Pfam" id="PF08369">
    <property type="entry name" value="PCP_red"/>
    <property type="match status" value="1"/>
</dbReference>
<dbReference type="PIRSF" id="PIRSF000163">
    <property type="entry name" value="PCP_ChlB"/>
    <property type="match status" value="1"/>
</dbReference>
<dbReference type="SUPFAM" id="SSF53807">
    <property type="entry name" value="Helical backbone' metal receptor"/>
    <property type="match status" value="1"/>
</dbReference>
<reference key="1">
    <citation type="journal article" date="2011" name="MBio">
        <title>Novel metabolic attributes of the genus Cyanothece, comprising a group of unicellular nitrogen-fixing Cyanobacteria.</title>
        <authorList>
            <person name="Bandyopadhyay A."/>
            <person name="Elvitigala T."/>
            <person name="Welsh E."/>
            <person name="Stockel J."/>
            <person name="Liberton M."/>
            <person name="Min H."/>
            <person name="Sherman L.A."/>
            <person name="Pakrasi H.B."/>
        </authorList>
    </citation>
    <scope>NUCLEOTIDE SEQUENCE [LARGE SCALE GENOMIC DNA]</scope>
    <source>
        <strain>PCC 7424</strain>
    </source>
</reference>
<gene>
    <name evidence="1" type="primary">chlB</name>
    <name type="ordered locus">PCC7424_0359</name>
</gene>
<name>CHLB_GLOC7</name>
<feature type="chain" id="PRO_1000120527" description="Light-independent protochlorophyllide reductase subunit B">
    <location>
        <begin position="1"/>
        <end position="508"/>
    </location>
</feature>
<feature type="active site" description="Proton donor" evidence="1">
    <location>
        <position position="294"/>
    </location>
</feature>
<feature type="binding site" evidence="1">
    <location>
        <position position="36"/>
    </location>
    <ligand>
        <name>[4Fe-4S] cluster</name>
        <dbReference type="ChEBI" id="CHEBI:49883"/>
        <note>ligand shared with heterodimeric partner</note>
    </ligand>
</feature>
<feature type="binding site" evidence="1">
    <location>
        <begin position="429"/>
        <end position="430"/>
    </location>
    <ligand>
        <name>substrate</name>
    </ligand>
</feature>
<evidence type="ECO:0000255" key="1">
    <source>
        <dbReference type="HAMAP-Rule" id="MF_00353"/>
    </source>
</evidence>
<comment type="function">
    <text evidence="1">Component of the dark-operative protochlorophyllide reductase (DPOR) that uses Mg-ATP and reduced ferredoxin to reduce ring D of protochlorophyllide (Pchlide) to form chlorophyllide a (Chlide). This reaction is light-independent. The NB-protein (ChlN-ChlB) is the catalytic component of the complex.</text>
</comment>
<comment type="catalytic activity">
    <reaction evidence="1">
        <text>chlorophyllide a + oxidized 2[4Fe-4S]-[ferredoxin] + 2 ADP + 2 phosphate = protochlorophyllide a + reduced 2[4Fe-4S]-[ferredoxin] + 2 ATP + 2 H2O</text>
        <dbReference type="Rhea" id="RHEA:28202"/>
        <dbReference type="Rhea" id="RHEA-COMP:10002"/>
        <dbReference type="Rhea" id="RHEA-COMP:10004"/>
        <dbReference type="ChEBI" id="CHEBI:15377"/>
        <dbReference type="ChEBI" id="CHEBI:30616"/>
        <dbReference type="ChEBI" id="CHEBI:33722"/>
        <dbReference type="ChEBI" id="CHEBI:33723"/>
        <dbReference type="ChEBI" id="CHEBI:43474"/>
        <dbReference type="ChEBI" id="CHEBI:83348"/>
        <dbReference type="ChEBI" id="CHEBI:83350"/>
        <dbReference type="ChEBI" id="CHEBI:456216"/>
        <dbReference type="EC" id="1.3.7.7"/>
    </reaction>
</comment>
<comment type="cofactor">
    <cofactor evidence="1">
        <name>[4Fe-4S] cluster</name>
        <dbReference type="ChEBI" id="CHEBI:49883"/>
    </cofactor>
    <text evidence="1">Binds 1 [4Fe-4S] cluster per heterodimer. The cluster is bound at the heterodimer interface by residues from both subunits.</text>
</comment>
<comment type="pathway">
    <text evidence="1">Porphyrin-containing compound metabolism; chlorophyll biosynthesis (light-independent).</text>
</comment>
<comment type="subunit">
    <text evidence="1">Protochlorophyllide reductase is composed of three subunits; ChlL, ChlN and ChlB. Forms a heterotetramer of two ChlB and two ChlN subunits.</text>
</comment>
<comment type="similarity">
    <text evidence="1">Belongs to the ChlB/BchB/BchZ family.</text>
</comment>
<proteinExistence type="inferred from homology"/>
<accession>B7KC04</accession>
<protein>
    <recommendedName>
        <fullName evidence="1">Light-independent protochlorophyllide reductase subunit B</fullName>
        <shortName evidence="1">DPOR subunit B</shortName>
        <shortName evidence="1">LI-POR subunit B</shortName>
        <ecNumber evidence="1">1.3.7.7</ecNumber>
    </recommendedName>
</protein>
<sequence length="508" mass="57214">MKLAYWMYAGPAHIGTLRIASSFKNVHAIMHAPLGDDYFNVMRSMLERERDFTPVTASVVDRNVLARGSQEKVVDNIVRKDQEETPDLIVLTPTCTSSILQEDLQNFVDRAQMDAKGDVMLADVNHYRVNELQAADRTLQQIVQYYLEKGRKKGELPTGKTEKPSVNIIGMTTLGFHNQHDCTELKRLMADLGIEVNEVIPEGASVQNLKNLPRAWFNLVPYREVGLMAARYLEQEFSMPYVDITPMGVVETARCIRKMGQLLNQQGANVDYEEFINQQTLYVSQAAWFSRSIDCQNLTGKKAVVFGDNTHAAAMTRILAREMGIHVVLAGTYCKYDADWFKEQVREYCDEILISEDHGEIADAIARIEPSAIFGTQMERHVGKRLDIPCGVIAAPIHIQNFPIGYKPFLGYEGTNQIADLVYNSFTLGMEDHLLEIFGGHDTKEVITKSVSADSDLNWNKEAQTELNKVPGFVRGKVKRNTEKFARERGFSEITLEVMYAAKEAVGA</sequence>
<keyword id="KW-0004">4Fe-4S</keyword>
<keyword id="KW-0067">ATP-binding</keyword>
<keyword id="KW-0149">Chlorophyll biosynthesis</keyword>
<keyword id="KW-0408">Iron</keyword>
<keyword id="KW-0411">Iron-sulfur</keyword>
<keyword id="KW-0479">Metal-binding</keyword>
<keyword id="KW-0547">Nucleotide-binding</keyword>
<keyword id="KW-0560">Oxidoreductase</keyword>
<keyword id="KW-0602">Photosynthesis</keyword>
<keyword id="KW-1185">Reference proteome</keyword>
<organism>
    <name type="scientific">Gloeothece citriformis (strain PCC 7424)</name>
    <name type="common">Cyanothece sp. (strain PCC 7424)</name>
    <dbReference type="NCBI Taxonomy" id="65393"/>
    <lineage>
        <taxon>Bacteria</taxon>
        <taxon>Bacillati</taxon>
        <taxon>Cyanobacteriota</taxon>
        <taxon>Cyanophyceae</taxon>
        <taxon>Oscillatoriophycideae</taxon>
        <taxon>Chroococcales</taxon>
        <taxon>Aphanothecaceae</taxon>
        <taxon>Gloeothece</taxon>
        <taxon>Gloeothece citriformis</taxon>
    </lineage>
</organism>